<dbReference type="EMBL" id="Z24459">
    <property type="protein sequence ID" value="CAA80828.1"/>
    <property type="molecule type" value="Genomic_DNA"/>
</dbReference>
<dbReference type="EMBL" id="BX470111">
    <property type="status" value="NOT_ANNOTATED_CDS"/>
    <property type="molecule type" value="Genomic_DNA"/>
</dbReference>
<dbReference type="EMBL" id="CH471172">
    <property type="protein sequence ID" value="EAW72642.1"/>
    <property type="molecule type" value="Genomic_DNA"/>
</dbReference>
<dbReference type="CCDS" id="CCDS44027.1">
    <molecule id="P56278-1"/>
</dbReference>
<dbReference type="PIR" id="S78532">
    <property type="entry name" value="S78532"/>
</dbReference>
<dbReference type="RefSeq" id="NP_001018025.1">
    <molecule id="P56278-1"/>
    <property type="nucleotide sequence ID" value="NM_001018025.4"/>
</dbReference>
<dbReference type="PDB" id="1A1X">
    <property type="method" value="X-ray"/>
    <property type="resolution" value="2.00 A"/>
    <property type="chains" value="A=2-107"/>
</dbReference>
<dbReference type="PDB" id="1QTT">
    <property type="method" value="NMR"/>
    <property type="chains" value="A=1-107"/>
</dbReference>
<dbReference type="PDB" id="1QTU">
    <property type="method" value="NMR"/>
    <property type="chains" value="A=1-107"/>
</dbReference>
<dbReference type="PDBsum" id="1A1X"/>
<dbReference type="PDBsum" id="1QTT"/>
<dbReference type="PDBsum" id="1QTU"/>
<dbReference type="SMR" id="P56278"/>
<dbReference type="BioGRID" id="110618">
    <property type="interactions" value="5"/>
</dbReference>
<dbReference type="FunCoup" id="P56278">
    <property type="interactions" value="361"/>
</dbReference>
<dbReference type="STRING" id="9606.ENSP00000358488"/>
<dbReference type="BioMuta" id="MTCP1"/>
<dbReference type="MassIVE" id="P56278"/>
<dbReference type="PaxDb" id="9606-ENSP00000358488"/>
<dbReference type="PeptideAtlas" id="P56278"/>
<dbReference type="ProteomicsDB" id="56909">
    <molecule id="P56278-1"/>
</dbReference>
<dbReference type="Antibodypedia" id="31399">
    <property type="antibodies" value="60 antibodies from 12 providers"/>
</dbReference>
<dbReference type="DNASU" id="4515"/>
<dbReference type="Ensembl" id="ENST00000362018.2">
    <molecule id="P56278-1"/>
    <property type="protein sequence ID" value="ENSP00000355058.2"/>
    <property type="gene ID" value="ENSG00000214827.11"/>
</dbReference>
<dbReference type="Ensembl" id="ENST00000369476.8">
    <molecule id="P56278-1"/>
    <property type="protein sequence ID" value="ENSP00000358488.3"/>
    <property type="gene ID" value="ENSG00000214827.11"/>
</dbReference>
<dbReference type="GeneID" id="4515"/>
<dbReference type="KEGG" id="hsa:4515"/>
<dbReference type="MANE-Select" id="ENST00000369476.8">
    <property type="protein sequence ID" value="ENSP00000358488.3"/>
    <property type="RefSeq nucleotide sequence ID" value="NM_001018025.4"/>
    <property type="RefSeq protein sequence ID" value="NP_001018025.1"/>
</dbReference>
<dbReference type="UCSC" id="uc004fmz.3">
    <molecule id="P56278-1"/>
    <property type="organism name" value="human"/>
</dbReference>
<dbReference type="AGR" id="HGNC:7423"/>
<dbReference type="CTD" id="4515"/>
<dbReference type="DisGeNET" id="4515"/>
<dbReference type="GeneCards" id="MTCP1"/>
<dbReference type="HGNC" id="HGNC:7423">
    <property type="gene designation" value="MTCP1"/>
</dbReference>
<dbReference type="HPA" id="ENSG00000214827">
    <property type="expression patterns" value="Low tissue specificity"/>
</dbReference>
<dbReference type="MIM" id="300116">
    <property type="type" value="gene"/>
</dbReference>
<dbReference type="neXtProt" id="NX_P56278"/>
<dbReference type="OpenTargets" id="ENSG00000214827"/>
<dbReference type="PharmGKB" id="PA164742098"/>
<dbReference type="VEuPathDB" id="HostDB:ENSG00000214827"/>
<dbReference type="eggNOG" id="ENOG502S5U8">
    <property type="taxonomic scope" value="Eukaryota"/>
</dbReference>
<dbReference type="GeneTree" id="ENSGT00390000006885"/>
<dbReference type="HOGENOM" id="CLU_168379_0_0_1"/>
<dbReference type="InParanoid" id="P56278"/>
<dbReference type="OMA" id="DHLWVHR"/>
<dbReference type="OrthoDB" id="9413917at2759"/>
<dbReference type="PAN-GO" id="P56278">
    <property type="GO annotations" value="2 GO annotations based on evolutionary models"/>
</dbReference>
<dbReference type="PhylomeDB" id="P56278"/>
<dbReference type="TreeFam" id="TF337903"/>
<dbReference type="PathwayCommons" id="P56278"/>
<dbReference type="SignaLink" id="P56278"/>
<dbReference type="SIGNOR" id="P56278"/>
<dbReference type="BioGRID-ORCS" id="4515">
    <property type="hits" value="10 hits in 753 CRISPR screens"/>
</dbReference>
<dbReference type="ChiTaRS" id="MTCP1">
    <property type="organism name" value="human"/>
</dbReference>
<dbReference type="EvolutionaryTrace" id="P56278"/>
<dbReference type="GeneWiki" id="MTCP1"/>
<dbReference type="GenomeRNAi" id="4515"/>
<dbReference type="Pharos" id="P56278">
    <property type="development level" value="Tbio"/>
</dbReference>
<dbReference type="PRO" id="PR:P56278"/>
<dbReference type="Proteomes" id="UP000005640">
    <property type="component" value="Chromosome X"/>
</dbReference>
<dbReference type="RNAct" id="P56278">
    <property type="molecule type" value="protein"/>
</dbReference>
<dbReference type="Bgee" id="ENSG00000214827">
    <property type="expression patterns" value="Expressed in male germ line stem cell (sensu Vertebrata) in testis and 105 other cell types or tissues"/>
</dbReference>
<dbReference type="GO" id="GO:0019901">
    <property type="term" value="F:protein kinase binding"/>
    <property type="evidence" value="ECO:0000353"/>
    <property type="project" value="UniProtKB"/>
</dbReference>
<dbReference type="GO" id="GO:0043539">
    <property type="term" value="F:protein serine/threonine kinase activator activity"/>
    <property type="evidence" value="ECO:0000314"/>
    <property type="project" value="UniProtKB"/>
</dbReference>
<dbReference type="GO" id="GO:0035556">
    <property type="term" value="P:intracellular signal transduction"/>
    <property type="evidence" value="ECO:0000314"/>
    <property type="project" value="UniProtKB"/>
</dbReference>
<dbReference type="FunFam" id="2.40.15.10:FF:000001">
    <property type="entry name" value="protein p13 MTCP-1"/>
    <property type="match status" value="1"/>
</dbReference>
<dbReference type="Gene3D" id="2.40.15.10">
    <property type="entry name" value="TCL1/MTCP1"/>
    <property type="match status" value="1"/>
</dbReference>
<dbReference type="InterPro" id="IPR004832">
    <property type="entry name" value="TCL1_MTCP1"/>
</dbReference>
<dbReference type="InterPro" id="IPR036672">
    <property type="entry name" value="TCL1_MTCP1_sf"/>
</dbReference>
<dbReference type="PANTHER" id="PTHR14060">
    <property type="entry name" value="PROTEIN P13 MTCP-1"/>
    <property type="match status" value="1"/>
</dbReference>
<dbReference type="PANTHER" id="PTHR14060:SF8">
    <property type="entry name" value="PROTEIN P13 MTCP-1"/>
    <property type="match status" value="1"/>
</dbReference>
<dbReference type="Pfam" id="PF01840">
    <property type="entry name" value="TCL1_MTCP1"/>
    <property type="match status" value="1"/>
</dbReference>
<dbReference type="SUPFAM" id="SSF50904">
    <property type="entry name" value="Oncogene products"/>
    <property type="match status" value="1"/>
</dbReference>
<evidence type="ECO:0000269" key="1">
    <source>
    </source>
</evidence>
<evidence type="ECO:0000305" key="2"/>
<evidence type="ECO:0007829" key="3">
    <source>
        <dbReference type="PDB" id="1A1X"/>
    </source>
</evidence>
<organism>
    <name type="scientific">Homo sapiens</name>
    <name type="common">Human</name>
    <dbReference type="NCBI Taxonomy" id="9606"/>
    <lineage>
        <taxon>Eukaryota</taxon>
        <taxon>Metazoa</taxon>
        <taxon>Chordata</taxon>
        <taxon>Craniata</taxon>
        <taxon>Vertebrata</taxon>
        <taxon>Euteleostomi</taxon>
        <taxon>Mammalia</taxon>
        <taxon>Eutheria</taxon>
        <taxon>Euarchontoglires</taxon>
        <taxon>Primates</taxon>
        <taxon>Haplorrhini</taxon>
        <taxon>Catarrhini</taxon>
        <taxon>Hominidae</taxon>
        <taxon>Homo</taxon>
    </lineage>
</organism>
<keyword id="KW-0002">3D-structure</keyword>
<keyword id="KW-0025">Alternative splicing</keyword>
<keyword id="KW-0160">Chromosomal rearrangement</keyword>
<keyword id="KW-1267">Proteomics identification</keyword>
<keyword id="KW-0656">Proto-oncogene</keyword>
<keyword id="KW-1185">Reference proteome</keyword>
<feature type="chain" id="PRO_0000184486" description="Protein p13 MTCP-1">
    <location>
        <begin position="1"/>
        <end position="107"/>
    </location>
</feature>
<feature type="strand" evidence="3">
    <location>
        <begin position="11"/>
        <end position="17"/>
    </location>
</feature>
<feature type="strand" evidence="3">
    <location>
        <begin position="20"/>
        <end position="23"/>
    </location>
</feature>
<feature type="strand" evidence="3">
    <location>
        <begin position="28"/>
        <end position="35"/>
    </location>
</feature>
<feature type="strand" evidence="3">
    <location>
        <begin position="40"/>
        <end position="45"/>
    </location>
</feature>
<feature type="helix" evidence="3">
    <location>
        <begin position="57"/>
        <end position="60"/>
    </location>
</feature>
<feature type="strand" evidence="3">
    <location>
        <begin position="67"/>
        <end position="72"/>
    </location>
</feature>
<feature type="turn" evidence="3">
    <location>
        <begin position="73"/>
        <end position="75"/>
    </location>
</feature>
<feature type="strand" evidence="3">
    <location>
        <begin position="76"/>
        <end position="79"/>
    </location>
</feature>
<feature type="strand" evidence="3">
    <location>
        <begin position="84"/>
        <end position="93"/>
    </location>
</feature>
<feature type="strand" evidence="3">
    <location>
        <begin position="96"/>
        <end position="103"/>
    </location>
</feature>
<gene>
    <name type="primary">MTCP1</name>
    <name type="synonym">C6.1B</name>
</gene>
<proteinExistence type="evidence at protein level"/>
<protein>
    <recommendedName>
        <fullName>Protein p13 MTCP-1</fullName>
        <shortName>p13MTCP1</shortName>
    </recommendedName>
    <alternativeName>
        <fullName>Mature T-cell proliferation-1 type B1</fullName>
        <shortName>MTCP-1 type B1</shortName>
    </alternativeName>
</protein>
<comment type="function">
    <text evidence="1">Enhances the phosphorylation and activation of AKT1 and AKT2.</text>
</comment>
<comment type="subunit">
    <text evidence="1">Interacts with AKT1 and AKT2 (via PH domain). Does not interact with AKT3.</text>
</comment>
<comment type="alternative products">
    <event type="alternative splicing"/>
    <isoform>
        <id>P56278-1</id>
        <name>2</name>
        <name>Long</name>
        <name>Type B1</name>
        <name>p13 MTCP1</name>
        <sequence type="displayed"/>
    </isoform>
    <isoform>
        <id>P56277-1</id>
        <name>1</name>
        <name>Short</name>
        <name>Type A</name>
        <name>p8 MTCP1</name>
        <sequence type="external"/>
    </isoform>
</comment>
<comment type="tissue specificity">
    <text>Not found at a significant level in any tissue.</text>
</comment>
<comment type="disease">
    <text>Detected in T-cell leukemia bearing a t(X;14) translocation. Plays a key role in T-cell prolymphocytic leukemia.</text>
</comment>
<comment type="miscellaneous">
    <molecule>Isoform 2</molecule>
    <text>Shares a non-coding 5' exon with isoform 1 which is spliced to a different set of 3' exons encoding an unrelated protein.</text>
</comment>
<comment type="similarity">
    <text evidence="2">Belongs to the TCL1 family.</text>
</comment>
<comment type="caution">
    <text evidence="2">MTCP1 and MTCP1NB are transcribed from the same promoter and could be considered the same gene.</text>
</comment>
<comment type="online information" name="Atlas of Genetics and Cytogenetics in Oncology and Haematology">
    <link uri="https://atlasgeneticsoncology.org/gene/89/MTCP1"/>
</comment>
<reference key="1">
    <citation type="journal article" date="1993" name="Oncogene">
        <title>MTCP-1: a novel gene on the human chromosome Xq28 translocated to the T cell receptor alpha/delta locus in mature T cell proliferations.</title>
        <authorList>
            <person name="Stern M.-H."/>
            <person name="Soulier J."/>
            <person name="Rosenzwajg M."/>
            <person name="Nakahara K."/>
            <person name="Canki-Klain N."/>
            <person name="Aurias A."/>
            <person name="Sigaux F."/>
            <person name="Kirsch I.R."/>
        </authorList>
    </citation>
    <scope>NUCLEOTIDE SEQUENCE [GENOMIC DNA]</scope>
    <scope>ALTERNATIVE SPLICING (ISOFORM 2)</scope>
    <source>
        <tissue>T-cell</tissue>
    </source>
</reference>
<reference key="2">
    <citation type="journal article" date="2005" name="Nature">
        <title>The DNA sequence of the human X chromosome.</title>
        <authorList>
            <person name="Ross M.T."/>
            <person name="Grafham D.V."/>
            <person name="Coffey A.J."/>
            <person name="Scherer S."/>
            <person name="McLay K."/>
            <person name="Muzny D."/>
            <person name="Platzer M."/>
            <person name="Howell G.R."/>
            <person name="Burrows C."/>
            <person name="Bird C.P."/>
            <person name="Frankish A."/>
            <person name="Lovell F.L."/>
            <person name="Howe K.L."/>
            <person name="Ashurst J.L."/>
            <person name="Fulton R.S."/>
            <person name="Sudbrak R."/>
            <person name="Wen G."/>
            <person name="Jones M.C."/>
            <person name="Hurles M.E."/>
            <person name="Andrews T.D."/>
            <person name="Scott C.E."/>
            <person name="Searle S."/>
            <person name="Ramser J."/>
            <person name="Whittaker A."/>
            <person name="Deadman R."/>
            <person name="Carter N.P."/>
            <person name="Hunt S.E."/>
            <person name="Chen R."/>
            <person name="Cree A."/>
            <person name="Gunaratne P."/>
            <person name="Havlak P."/>
            <person name="Hodgson A."/>
            <person name="Metzker M.L."/>
            <person name="Richards S."/>
            <person name="Scott G."/>
            <person name="Steffen D."/>
            <person name="Sodergren E."/>
            <person name="Wheeler D.A."/>
            <person name="Worley K.C."/>
            <person name="Ainscough R."/>
            <person name="Ambrose K.D."/>
            <person name="Ansari-Lari M.A."/>
            <person name="Aradhya S."/>
            <person name="Ashwell R.I."/>
            <person name="Babbage A.K."/>
            <person name="Bagguley C.L."/>
            <person name="Ballabio A."/>
            <person name="Banerjee R."/>
            <person name="Barker G.E."/>
            <person name="Barlow K.F."/>
            <person name="Barrett I.P."/>
            <person name="Bates K.N."/>
            <person name="Beare D.M."/>
            <person name="Beasley H."/>
            <person name="Beasley O."/>
            <person name="Beck A."/>
            <person name="Bethel G."/>
            <person name="Blechschmidt K."/>
            <person name="Brady N."/>
            <person name="Bray-Allen S."/>
            <person name="Bridgeman A.M."/>
            <person name="Brown A.J."/>
            <person name="Brown M.J."/>
            <person name="Bonnin D."/>
            <person name="Bruford E.A."/>
            <person name="Buhay C."/>
            <person name="Burch P."/>
            <person name="Burford D."/>
            <person name="Burgess J."/>
            <person name="Burrill W."/>
            <person name="Burton J."/>
            <person name="Bye J.M."/>
            <person name="Carder C."/>
            <person name="Carrel L."/>
            <person name="Chako J."/>
            <person name="Chapman J.C."/>
            <person name="Chavez D."/>
            <person name="Chen E."/>
            <person name="Chen G."/>
            <person name="Chen Y."/>
            <person name="Chen Z."/>
            <person name="Chinault C."/>
            <person name="Ciccodicola A."/>
            <person name="Clark S.Y."/>
            <person name="Clarke G."/>
            <person name="Clee C.M."/>
            <person name="Clegg S."/>
            <person name="Clerc-Blankenburg K."/>
            <person name="Clifford K."/>
            <person name="Cobley V."/>
            <person name="Cole C.G."/>
            <person name="Conquer J.S."/>
            <person name="Corby N."/>
            <person name="Connor R.E."/>
            <person name="David R."/>
            <person name="Davies J."/>
            <person name="Davis C."/>
            <person name="Davis J."/>
            <person name="Delgado O."/>
            <person name="Deshazo D."/>
            <person name="Dhami P."/>
            <person name="Ding Y."/>
            <person name="Dinh H."/>
            <person name="Dodsworth S."/>
            <person name="Draper H."/>
            <person name="Dugan-Rocha S."/>
            <person name="Dunham A."/>
            <person name="Dunn M."/>
            <person name="Durbin K.J."/>
            <person name="Dutta I."/>
            <person name="Eades T."/>
            <person name="Ellwood M."/>
            <person name="Emery-Cohen A."/>
            <person name="Errington H."/>
            <person name="Evans K.L."/>
            <person name="Faulkner L."/>
            <person name="Francis F."/>
            <person name="Frankland J."/>
            <person name="Fraser A.E."/>
            <person name="Galgoczy P."/>
            <person name="Gilbert J."/>
            <person name="Gill R."/>
            <person name="Gloeckner G."/>
            <person name="Gregory S.G."/>
            <person name="Gribble S."/>
            <person name="Griffiths C."/>
            <person name="Grocock R."/>
            <person name="Gu Y."/>
            <person name="Gwilliam R."/>
            <person name="Hamilton C."/>
            <person name="Hart E.A."/>
            <person name="Hawes A."/>
            <person name="Heath P.D."/>
            <person name="Heitmann K."/>
            <person name="Hennig S."/>
            <person name="Hernandez J."/>
            <person name="Hinzmann B."/>
            <person name="Ho S."/>
            <person name="Hoffs M."/>
            <person name="Howden P.J."/>
            <person name="Huckle E.J."/>
            <person name="Hume J."/>
            <person name="Hunt P.J."/>
            <person name="Hunt A.R."/>
            <person name="Isherwood J."/>
            <person name="Jacob L."/>
            <person name="Johnson D."/>
            <person name="Jones S."/>
            <person name="de Jong P.J."/>
            <person name="Joseph S.S."/>
            <person name="Keenan S."/>
            <person name="Kelly S."/>
            <person name="Kershaw J.K."/>
            <person name="Khan Z."/>
            <person name="Kioschis P."/>
            <person name="Klages S."/>
            <person name="Knights A.J."/>
            <person name="Kosiura A."/>
            <person name="Kovar-Smith C."/>
            <person name="Laird G.K."/>
            <person name="Langford C."/>
            <person name="Lawlor S."/>
            <person name="Leversha M."/>
            <person name="Lewis L."/>
            <person name="Liu W."/>
            <person name="Lloyd C."/>
            <person name="Lloyd D.M."/>
            <person name="Loulseged H."/>
            <person name="Loveland J.E."/>
            <person name="Lovell J.D."/>
            <person name="Lozado R."/>
            <person name="Lu J."/>
            <person name="Lyne R."/>
            <person name="Ma J."/>
            <person name="Maheshwari M."/>
            <person name="Matthews L.H."/>
            <person name="McDowall J."/>
            <person name="McLaren S."/>
            <person name="McMurray A."/>
            <person name="Meidl P."/>
            <person name="Meitinger T."/>
            <person name="Milne S."/>
            <person name="Miner G."/>
            <person name="Mistry S.L."/>
            <person name="Morgan M."/>
            <person name="Morris S."/>
            <person name="Mueller I."/>
            <person name="Mullikin J.C."/>
            <person name="Nguyen N."/>
            <person name="Nordsiek G."/>
            <person name="Nyakatura G."/>
            <person name="O'dell C.N."/>
            <person name="Okwuonu G."/>
            <person name="Palmer S."/>
            <person name="Pandian R."/>
            <person name="Parker D."/>
            <person name="Parrish J."/>
            <person name="Pasternak S."/>
            <person name="Patel D."/>
            <person name="Pearce A.V."/>
            <person name="Pearson D.M."/>
            <person name="Pelan S.E."/>
            <person name="Perez L."/>
            <person name="Porter K.M."/>
            <person name="Ramsey Y."/>
            <person name="Reichwald K."/>
            <person name="Rhodes S."/>
            <person name="Ridler K.A."/>
            <person name="Schlessinger D."/>
            <person name="Schueler M.G."/>
            <person name="Sehra H.K."/>
            <person name="Shaw-Smith C."/>
            <person name="Shen H."/>
            <person name="Sheridan E.M."/>
            <person name="Shownkeen R."/>
            <person name="Skuce C.D."/>
            <person name="Smith M.L."/>
            <person name="Sotheran E.C."/>
            <person name="Steingruber H.E."/>
            <person name="Steward C.A."/>
            <person name="Storey R."/>
            <person name="Swann R.M."/>
            <person name="Swarbreck D."/>
            <person name="Tabor P.E."/>
            <person name="Taudien S."/>
            <person name="Taylor T."/>
            <person name="Teague B."/>
            <person name="Thomas K."/>
            <person name="Thorpe A."/>
            <person name="Timms K."/>
            <person name="Tracey A."/>
            <person name="Trevanion S."/>
            <person name="Tromans A.C."/>
            <person name="d'Urso M."/>
            <person name="Verduzco D."/>
            <person name="Villasana D."/>
            <person name="Waldron L."/>
            <person name="Wall M."/>
            <person name="Wang Q."/>
            <person name="Warren J."/>
            <person name="Warry G.L."/>
            <person name="Wei X."/>
            <person name="West A."/>
            <person name="Whitehead S.L."/>
            <person name="Whiteley M.N."/>
            <person name="Wilkinson J.E."/>
            <person name="Willey D.L."/>
            <person name="Williams G."/>
            <person name="Williams L."/>
            <person name="Williamson A."/>
            <person name="Williamson H."/>
            <person name="Wilming L."/>
            <person name="Woodmansey R.L."/>
            <person name="Wray P.W."/>
            <person name="Yen J."/>
            <person name="Zhang J."/>
            <person name="Zhou J."/>
            <person name="Zoghbi H."/>
            <person name="Zorilla S."/>
            <person name="Buck D."/>
            <person name="Reinhardt R."/>
            <person name="Poustka A."/>
            <person name="Rosenthal A."/>
            <person name="Lehrach H."/>
            <person name="Meindl A."/>
            <person name="Minx P.J."/>
            <person name="Hillier L.W."/>
            <person name="Willard H.F."/>
            <person name="Wilson R.K."/>
            <person name="Waterston R.H."/>
            <person name="Rice C.M."/>
            <person name="Vaudin M."/>
            <person name="Coulson A."/>
            <person name="Nelson D.L."/>
            <person name="Weinstock G."/>
            <person name="Sulston J.E."/>
            <person name="Durbin R.M."/>
            <person name="Hubbard T."/>
            <person name="Gibbs R.A."/>
            <person name="Beck S."/>
            <person name="Rogers J."/>
            <person name="Bentley D.R."/>
        </authorList>
    </citation>
    <scope>NUCLEOTIDE SEQUENCE [LARGE SCALE GENOMIC DNA]</scope>
</reference>
<reference key="3">
    <citation type="submission" date="2005-09" db="EMBL/GenBank/DDBJ databases">
        <authorList>
            <person name="Mural R.J."/>
            <person name="Istrail S."/>
            <person name="Sutton G.G."/>
            <person name="Florea L."/>
            <person name="Halpern A.L."/>
            <person name="Mobarry C.M."/>
            <person name="Lippert R."/>
            <person name="Walenz B."/>
            <person name="Shatkay H."/>
            <person name="Dew I."/>
            <person name="Miller J.R."/>
            <person name="Flanigan M.J."/>
            <person name="Edwards N.J."/>
            <person name="Bolanos R."/>
            <person name="Fasulo D."/>
            <person name="Halldorsson B.V."/>
            <person name="Hannenhalli S."/>
            <person name="Turner R."/>
            <person name="Yooseph S."/>
            <person name="Lu F."/>
            <person name="Nusskern D.R."/>
            <person name="Shue B.C."/>
            <person name="Zheng X.H."/>
            <person name="Zhong F."/>
            <person name="Delcher A.L."/>
            <person name="Huson D.H."/>
            <person name="Kravitz S.A."/>
            <person name="Mouchard L."/>
            <person name="Reinert K."/>
            <person name="Remington K.A."/>
            <person name="Clark A.G."/>
            <person name="Waterman M.S."/>
            <person name="Eichler E.E."/>
            <person name="Adams M.D."/>
            <person name="Hunkapiller M.W."/>
            <person name="Myers E.W."/>
            <person name="Venter J.C."/>
        </authorList>
    </citation>
    <scope>NUCLEOTIDE SEQUENCE [LARGE SCALE GENOMIC DNA]</scope>
</reference>
<reference key="4">
    <citation type="journal article" date="2000" name="Mol. Cell">
        <title>The protooncogene TCL1 is an Akt kinase coactivator.</title>
        <authorList>
            <person name="Laine J."/>
            <person name="Kuenstle G."/>
            <person name="Obata T."/>
            <person name="Sha M."/>
            <person name="Noguchi M."/>
        </authorList>
    </citation>
    <scope>FUNCTION</scope>
    <scope>INTERACTION WITH AKT1 AND AKT2</scope>
</reference>
<reference key="5">
    <citation type="journal article" date="2002" name="J. Biol. Chem.">
        <title>Differential regulation of Akt kinase isoforms by the members of the TCL1 oncogene family.</title>
        <authorList>
            <person name="Laine J."/>
            <person name="Kuenstle G."/>
            <person name="Obata T."/>
            <person name="Noguchi M."/>
        </authorList>
    </citation>
    <scope>LACK OF INTERACTION WITH AKT3</scope>
</reference>
<reference key="6">
    <citation type="journal article" date="1998" name="Proc. Natl. Acad. Sci. U.S.A.">
        <title>Crystal structure of MTCP-1: implications for role of TCL-1 and MTCP-1 in T cell malignancies.</title>
        <authorList>
            <person name="Fu Z.Q."/>
            <person name="du Bois G.C."/>
            <person name="Song S.P."/>
            <person name="Kulikovskaya I."/>
            <person name="Virgilio L."/>
            <person name="Rothstein J.L."/>
            <person name="Croce C.M."/>
            <person name="Weber I.T."/>
            <person name="Harrison R.W."/>
        </authorList>
    </citation>
    <scope>X-RAY CRYSTALLOGRAPHY (2.0 ANGSTROMS)</scope>
</reference>
<reference key="7">
    <citation type="journal article" date="2000" name="J. Biomol. NMR">
        <title>Backbone dynamics and solution structure refinement of the 15N-labeled human oncogenic protein p13MTCP1: comparison with X-ray data.</title>
        <authorList>
            <person name="Guignard L."/>
            <person name="Padilla A."/>
            <person name="Mispelter J."/>
            <person name="Yang Y.-S."/>
            <person name="Stern M.-H."/>
            <person name="Lhoste J.-M."/>
            <person name="Roumestand C."/>
        </authorList>
    </citation>
    <scope>STRUCTURE BY NMR</scope>
</reference>
<name>MTCP1_HUMAN</name>
<sequence>MAGEDVGAPPDHLWVHQEGIYRDEYQRTWVAVVEEETSFLRARVQQIQVPLGDAARPSHLLTSQLPLMWQLYPEERYMDNNSRLWQIQHHLMVRGVQELLLKLLPDD</sequence>
<accession>P56278</accession>
<accession>Q5HYP2</accession>